<name>CP46A_MOUSE</name>
<organism>
    <name type="scientific">Mus musculus</name>
    <name type="common">Mouse</name>
    <dbReference type="NCBI Taxonomy" id="10090"/>
    <lineage>
        <taxon>Eukaryota</taxon>
        <taxon>Metazoa</taxon>
        <taxon>Chordata</taxon>
        <taxon>Craniata</taxon>
        <taxon>Vertebrata</taxon>
        <taxon>Euteleostomi</taxon>
        <taxon>Mammalia</taxon>
        <taxon>Eutheria</taxon>
        <taxon>Euarchontoglires</taxon>
        <taxon>Glires</taxon>
        <taxon>Rodentia</taxon>
        <taxon>Myomorpha</taxon>
        <taxon>Muroidea</taxon>
        <taxon>Muridae</taxon>
        <taxon>Murinae</taxon>
        <taxon>Mus</taxon>
        <taxon>Mus</taxon>
    </lineage>
</organism>
<keyword id="KW-0966">Cell projection</keyword>
<keyword id="KW-0153">Cholesterol metabolism</keyword>
<keyword id="KW-0256">Endoplasmic reticulum</keyword>
<keyword id="KW-0349">Heme</keyword>
<keyword id="KW-0408">Iron</keyword>
<keyword id="KW-0443">Lipid metabolism</keyword>
<keyword id="KW-0472">Membrane</keyword>
<keyword id="KW-0479">Metal-binding</keyword>
<keyword id="KW-0492">Microsome</keyword>
<keyword id="KW-0503">Monooxygenase</keyword>
<keyword id="KW-0560">Oxidoreductase</keyword>
<keyword id="KW-1185">Reference proteome</keyword>
<keyword id="KW-0753">Steroid metabolism</keyword>
<keyword id="KW-1207">Sterol metabolism</keyword>
<keyword id="KW-0770">Synapse</keyword>
<keyword id="KW-0812">Transmembrane</keyword>
<keyword id="KW-1133">Transmembrane helix</keyword>
<feature type="chain" id="PRO_0000051995" description="Cholesterol 24-hydroxylase">
    <location>
        <begin position="1"/>
        <end position="500"/>
    </location>
</feature>
<feature type="transmembrane region" description="Helical" evidence="2">
    <location>
        <begin position="3"/>
        <end position="23"/>
    </location>
</feature>
<feature type="binding site" description="axial binding residue" evidence="1">
    <location>
        <position position="437"/>
    </location>
    <ligand>
        <name>heme</name>
        <dbReference type="ChEBI" id="CHEBI:30413"/>
    </ligand>
    <ligandPart>
        <name>Fe</name>
        <dbReference type="ChEBI" id="CHEBI:18248"/>
    </ligandPart>
</feature>
<dbReference type="EC" id="1.14.14.25" evidence="3"/>
<dbReference type="EMBL" id="AF094479">
    <property type="protein sequence ID" value="AAD41243.1"/>
    <property type="molecule type" value="mRNA"/>
</dbReference>
<dbReference type="EMBL" id="BC018307">
    <property type="protein sequence ID" value="AAH18307.1"/>
    <property type="molecule type" value="mRNA"/>
</dbReference>
<dbReference type="CCDS" id="CCDS26160.1"/>
<dbReference type="RefSeq" id="NP_034140.1">
    <property type="nucleotide sequence ID" value="NM_010010.3"/>
</dbReference>
<dbReference type="SMR" id="Q9WVK8"/>
<dbReference type="BioGRID" id="199032">
    <property type="interactions" value="2"/>
</dbReference>
<dbReference type="FunCoup" id="Q9WVK8">
    <property type="interactions" value="454"/>
</dbReference>
<dbReference type="STRING" id="10090.ENSMUSP00000021684"/>
<dbReference type="GlyGen" id="Q9WVK8">
    <property type="glycosylation" value="1 site, 1 O-linked glycan (1 site)"/>
</dbReference>
<dbReference type="iPTMnet" id="Q9WVK8"/>
<dbReference type="PhosphoSitePlus" id="Q9WVK8"/>
<dbReference type="SwissPalm" id="Q9WVK8"/>
<dbReference type="PaxDb" id="10090-ENSMUSP00000021684"/>
<dbReference type="ProteomicsDB" id="285280"/>
<dbReference type="Antibodypedia" id="14316">
    <property type="antibodies" value="294 antibodies from 32 providers"/>
</dbReference>
<dbReference type="DNASU" id="13116"/>
<dbReference type="Ensembl" id="ENSMUST00000021684.6">
    <property type="protein sequence ID" value="ENSMUSP00000021684.5"/>
    <property type="gene ID" value="ENSMUSG00000021259.6"/>
</dbReference>
<dbReference type="GeneID" id="13116"/>
<dbReference type="KEGG" id="mmu:13116"/>
<dbReference type="UCSC" id="uc007ozo.1">
    <property type="organism name" value="mouse"/>
</dbReference>
<dbReference type="AGR" id="MGI:1341877"/>
<dbReference type="CTD" id="10858"/>
<dbReference type="MGI" id="MGI:1341877">
    <property type="gene designation" value="Cyp46a1"/>
</dbReference>
<dbReference type="VEuPathDB" id="HostDB:ENSMUSG00000021259"/>
<dbReference type="eggNOG" id="KOG0157">
    <property type="taxonomic scope" value="Eukaryota"/>
</dbReference>
<dbReference type="GeneTree" id="ENSGT00940000156927"/>
<dbReference type="HOGENOM" id="CLU_001570_5_1_1"/>
<dbReference type="InParanoid" id="Q9WVK8"/>
<dbReference type="OMA" id="WKHQRRT"/>
<dbReference type="OrthoDB" id="1470350at2759"/>
<dbReference type="PhylomeDB" id="Q9WVK8"/>
<dbReference type="TreeFam" id="TF352037"/>
<dbReference type="BRENDA" id="1.14.14.25">
    <property type="organism ID" value="3474"/>
</dbReference>
<dbReference type="Reactome" id="R-MMU-193775">
    <property type="pathway name" value="Synthesis of bile acids and bile salts via 24-hydroxycholesterol"/>
</dbReference>
<dbReference type="Reactome" id="R-MMU-211976">
    <property type="pathway name" value="Endogenous sterols"/>
</dbReference>
<dbReference type="UniPathway" id="UPA00229"/>
<dbReference type="UniPathway" id="UPA01058"/>
<dbReference type="BioGRID-ORCS" id="13116">
    <property type="hits" value="0 hits in 80 CRISPR screens"/>
</dbReference>
<dbReference type="CD-CODE" id="CE726F99">
    <property type="entry name" value="Postsynaptic density"/>
</dbReference>
<dbReference type="PRO" id="PR:Q9WVK8"/>
<dbReference type="Proteomes" id="UP000000589">
    <property type="component" value="Chromosome 12"/>
</dbReference>
<dbReference type="RNAct" id="Q9WVK8">
    <property type="molecule type" value="protein"/>
</dbReference>
<dbReference type="Bgee" id="ENSMUSG00000021259">
    <property type="expression patterns" value="Expressed in visual cortex and 120 other cell types or tissues"/>
</dbReference>
<dbReference type="ExpressionAtlas" id="Q9WVK8">
    <property type="expression patterns" value="baseline and differential"/>
</dbReference>
<dbReference type="GO" id="GO:0030425">
    <property type="term" value="C:dendrite"/>
    <property type="evidence" value="ECO:0000314"/>
    <property type="project" value="UniProtKB"/>
</dbReference>
<dbReference type="GO" id="GO:0005789">
    <property type="term" value="C:endoplasmic reticulum membrane"/>
    <property type="evidence" value="ECO:0000314"/>
    <property type="project" value="UniProtKB"/>
</dbReference>
<dbReference type="GO" id="GO:0098794">
    <property type="term" value="C:postsynapse"/>
    <property type="evidence" value="ECO:0000314"/>
    <property type="project" value="UniProtKB"/>
</dbReference>
<dbReference type="GO" id="GO:0098793">
    <property type="term" value="C:presynapse"/>
    <property type="evidence" value="ECO:0000314"/>
    <property type="project" value="UniProtKB"/>
</dbReference>
<dbReference type="GO" id="GO:0033781">
    <property type="term" value="F:cholesterol 24-hydroxylase activity"/>
    <property type="evidence" value="ECO:0000314"/>
    <property type="project" value="UniProtKB"/>
</dbReference>
<dbReference type="GO" id="GO:0020037">
    <property type="term" value="F:heme binding"/>
    <property type="evidence" value="ECO:0000250"/>
    <property type="project" value="UniProtKB"/>
</dbReference>
<dbReference type="GO" id="GO:0005506">
    <property type="term" value="F:iron ion binding"/>
    <property type="evidence" value="ECO:0007669"/>
    <property type="project" value="InterPro"/>
</dbReference>
<dbReference type="GO" id="GO:0008395">
    <property type="term" value="F:steroid hydroxylase activity"/>
    <property type="evidence" value="ECO:0000250"/>
    <property type="project" value="UniProtKB"/>
</dbReference>
<dbReference type="GO" id="GO:0062184">
    <property type="term" value="F:testosterone 16-beta-hydroxylase activity"/>
    <property type="evidence" value="ECO:0007669"/>
    <property type="project" value="RHEA"/>
</dbReference>
<dbReference type="GO" id="GO:0050649">
    <property type="term" value="F:testosterone 6-beta-hydroxylase activity"/>
    <property type="evidence" value="ECO:0007669"/>
    <property type="project" value="RHEA"/>
</dbReference>
<dbReference type="GO" id="GO:0006707">
    <property type="term" value="P:cholesterol catabolic process"/>
    <property type="evidence" value="ECO:0000314"/>
    <property type="project" value="UniProtKB"/>
</dbReference>
<dbReference type="GO" id="GO:0042448">
    <property type="term" value="P:progesterone metabolic process"/>
    <property type="evidence" value="ECO:0000250"/>
    <property type="project" value="UniProtKB"/>
</dbReference>
<dbReference type="GO" id="GO:1903044">
    <property type="term" value="P:protein localization to membrane raft"/>
    <property type="evidence" value="ECO:0000314"/>
    <property type="project" value="ARUK-UCL"/>
</dbReference>
<dbReference type="GO" id="GO:1900271">
    <property type="term" value="P:regulation of long-term synaptic potentiation"/>
    <property type="evidence" value="ECO:0000315"/>
    <property type="project" value="UniProtKB"/>
</dbReference>
<dbReference type="GO" id="GO:0006805">
    <property type="term" value="P:xenobiotic metabolic process"/>
    <property type="evidence" value="ECO:0000250"/>
    <property type="project" value="UniProtKB"/>
</dbReference>
<dbReference type="CDD" id="cd20613">
    <property type="entry name" value="CYP46A1-like"/>
    <property type="match status" value="1"/>
</dbReference>
<dbReference type="FunFam" id="1.10.630.10:FF:000031">
    <property type="entry name" value="cholesterol 24-hydroxylase isoform X2"/>
    <property type="match status" value="1"/>
</dbReference>
<dbReference type="Gene3D" id="1.10.630.10">
    <property type="entry name" value="Cytochrome P450"/>
    <property type="match status" value="1"/>
</dbReference>
<dbReference type="InterPro" id="IPR039983">
    <property type="entry name" value="CYP46A1"/>
</dbReference>
<dbReference type="InterPro" id="IPR001128">
    <property type="entry name" value="Cyt_P450"/>
</dbReference>
<dbReference type="InterPro" id="IPR017972">
    <property type="entry name" value="Cyt_P450_CS"/>
</dbReference>
<dbReference type="InterPro" id="IPR002401">
    <property type="entry name" value="Cyt_P450_E_grp-I"/>
</dbReference>
<dbReference type="InterPro" id="IPR036396">
    <property type="entry name" value="Cyt_P450_sf"/>
</dbReference>
<dbReference type="PANTHER" id="PTHR24293:SF1">
    <property type="entry name" value="CHOLESTEROL 24-HYDROXYLASE"/>
    <property type="match status" value="1"/>
</dbReference>
<dbReference type="PANTHER" id="PTHR24293">
    <property type="entry name" value="CYTOCHROME P450 FAMILY 46 SUBFAMILY A"/>
    <property type="match status" value="1"/>
</dbReference>
<dbReference type="Pfam" id="PF00067">
    <property type="entry name" value="p450"/>
    <property type="match status" value="1"/>
</dbReference>
<dbReference type="PRINTS" id="PR00463">
    <property type="entry name" value="EP450I"/>
</dbReference>
<dbReference type="PRINTS" id="PR00385">
    <property type="entry name" value="P450"/>
</dbReference>
<dbReference type="SUPFAM" id="SSF48264">
    <property type="entry name" value="Cytochrome P450"/>
    <property type="match status" value="1"/>
</dbReference>
<dbReference type="PROSITE" id="PS00086">
    <property type="entry name" value="CYTOCHROME_P450"/>
    <property type="match status" value="1"/>
</dbReference>
<proteinExistence type="evidence at protein level"/>
<evidence type="ECO:0000250" key="1">
    <source>
        <dbReference type="UniProtKB" id="Q9Y6A2"/>
    </source>
</evidence>
<evidence type="ECO:0000255" key="2"/>
<evidence type="ECO:0000269" key="3">
    <source>
    </source>
</evidence>
<evidence type="ECO:0000269" key="4">
    <source>
    </source>
</evidence>
<evidence type="ECO:0000269" key="5">
    <source>
    </source>
</evidence>
<evidence type="ECO:0000269" key="6">
    <source>
    </source>
</evidence>
<evidence type="ECO:0000303" key="7">
    <source>
    </source>
</evidence>
<evidence type="ECO:0000303" key="8">
    <source>
    </source>
</evidence>
<evidence type="ECO:0000305" key="9"/>
<evidence type="ECO:0000305" key="10">
    <source>
    </source>
</evidence>
<evidence type="ECO:0000305" key="11">
    <source>
    </source>
</evidence>
<evidence type="ECO:0000312" key="12">
    <source>
        <dbReference type="MGI" id="MGI:1341877"/>
    </source>
</evidence>
<sequence length="500" mass="56814">MSPGLLLLGSAVLLAFGLCCTFVHRARSRYEHIPGPPRPSFLLGHLPYFWKKDEDCGRVLQDVFLDWAKKYGPVVRVNVFYKTSVIVTSPESVKKFLMSTKYNKDSKMYRALQTVFGERLFGQGLVSECDYGRWYKQRKVMDLAFSRSSLVSLMETFNEKAEQLVEILEAKADGQTPVSMQDMLTCATIDILAKAAFGMETSMLLGAQKPLSQAVKVMLEGISASRNTLAKFMPGKRKQLREIRESIRLLRQVGKDWVQRRREALKRGEDMPADILTQILKAEEGAQDDEVLLDNFVTFFIAGHETSANHLAFTVMELSRQPEIVARLQAEVDEVVGSKRHLDYEDLGRLQYLSQVLKESLRLYPPAWGTFRLLEEETLIDGVRVPGNTPLLFSTYVMGRMDTYFEDPLTFNPDRFGPGAPKPRFTYFPFSLGHRSCIGQQFAQMEVKVVMAKLLQRIEFRLVPGQRFGLQEQATLKPLDPVLCTLRPRGWQPAPPPPPC</sequence>
<accession>Q9WVK8</accession>
<protein>
    <recommendedName>
        <fullName evidence="10">Cholesterol 24-hydroxylase</fullName>
        <shortName>CH24H</shortName>
        <ecNumber evidence="3">1.14.14.25</ecNumber>
    </recommendedName>
    <alternativeName>
        <fullName>Cholesterol 24-monooxygenase</fullName>
    </alternativeName>
    <alternativeName>
        <fullName evidence="7">Cholesterol 24S-hydroxylase</fullName>
    </alternativeName>
    <alternativeName>
        <fullName evidence="8">Cytochrome P450 46A1</fullName>
    </alternativeName>
</protein>
<gene>
    <name evidence="8 12" type="primary">Cyp46a1</name>
    <name type="synonym">Cyp46</name>
</gene>
<comment type="function">
    <text evidence="1 3 4 6">P450 monooxygenase that plays a major role in cholesterol homeostasis in the brain. Primarily catalyzes the hydroxylation (with S stereochemistry) at C-24 of cholesterol side chain, triggering cholesterol diffusion out of neurons and its further degradation (PubMed:10377398, PubMed:16505352, PubMed:28190002). By promoting constant cholesterol elimination in neurons, may activate the mevalonate pathway and coordinate the synthesis of new cholesterol and nonsterol isoprenoids involved in synaptic activity and learning (PubMed:16505352). Further hydroxylates cholesterol derivatives and hormone steroids on both the ring and side chain of these molecules, converting them into active oxysterols involved in lipid signaling and biosynthesis (By similarity). Acts as an epoxidase converting cholesta-5,24-dien-3beta-ol/desmosterol into (24S),25-epoxycholesterol, an abundant lipid ligand of nuclear NR1H2 and NR1H3 receptors shown to promote neurogenesis in developing brain (By similarity). May also catalyze the oxidative metabolism of xenobiotics, such as clotrimazole (By similarity).</text>
</comment>
<comment type="catalytic activity">
    <reaction evidence="3">
        <text>cholesterol + reduced [NADPH--hemoprotein reductase] + O2 = (24S)-hydroxycholesterol + oxidized [NADPH--hemoprotein reductase] + H2O + H(+)</text>
        <dbReference type="Rhea" id="RHEA:22716"/>
        <dbReference type="Rhea" id="RHEA-COMP:11964"/>
        <dbReference type="Rhea" id="RHEA-COMP:11965"/>
        <dbReference type="ChEBI" id="CHEBI:15377"/>
        <dbReference type="ChEBI" id="CHEBI:15378"/>
        <dbReference type="ChEBI" id="CHEBI:15379"/>
        <dbReference type="ChEBI" id="CHEBI:16113"/>
        <dbReference type="ChEBI" id="CHEBI:34310"/>
        <dbReference type="ChEBI" id="CHEBI:57618"/>
        <dbReference type="ChEBI" id="CHEBI:58210"/>
        <dbReference type="EC" id="1.14.14.25"/>
    </reaction>
    <physiologicalReaction direction="left-to-right" evidence="11">
        <dbReference type="Rhea" id="RHEA:22717"/>
    </physiologicalReaction>
</comment>
<comment type="catalytic activity">
    <reaction evidence="1">
        <text>cholestanol + reduced [NADPH--hemoprotein reductase] + O2 = (24S)-hydroxycholestanol + oxidized [NADPH--hemoprotein reductase] + H2O + H(+)</text>
        <dbReference type="Rhea" id="RHEA:53808"/>
        <dbReference type="Rhea" id="RHEA-COMP:11964"/>
        <dbReference type="Rhea" id="RHEA-COMP:11965"/>
        <dbReference type="ChEBI" id="CHEBI:15377"/>
        <dbReference type="ChEBI" id="CHEBI:15378"/>
        <dbReference type="ChEBI" id="CHEBI:15379"/>
        <dbReference type="ChEBI" id="CHEBI:57618"/>
        <dbReference type="ChEBI" id="CHEBI:58210"/>
        <dbReference type="ChEBI" id="CHEBI:86570"/>
        <dbReference type="ChEBI" id="CHEBI:137687"/>
    </reaction>
    <physiologicalReaction direction="left-to-right" evidence="11">
        <dbReference type="Rhea" id="RHEA:53809"/>
    </physiologicalReaction>
</comment>
<comment type="catalytic activity">
    <reaction evidence="1">
        <text>7-dehydrocholesterol + reduced [NADPH--hemoprotein reductase] + O2 = cholesta-5,7-dien-3beta,24S-diol + oxidized [NADPH--hemoprotein reductase] + H2O + H(+)</text>
        <dbReference type="Rhea" id="RHEA:53244"/>
        <dbReference type="Rhea" id="RHEA-COMP:11964"/>
        <dbReference type="Rhea" id="RHEA-COMP:11965"/>
        <dbReference type="ChEBI" id="CHEBI:15377"/>
        <dbReference type="ChEBI" id="CHEBI:15378"/>
        <dbReference type="ChEBI" id="CHEBI:15379"/>
        <dbReference type="ChEBI" id="CHEBI:17759"/>
        <dbReference type="ChEBI" id="CHEBI:57618"/>
        <dbReference type="ChEBI" id="CHEBI:58210"/>
        <dbReference type="ChEBI" id="CHEBI:137061"/>
    </reaction>
    <physiologicalReaction direction="left-to-right" evidence="9">
        <dbReference type="Rhea" id="RHEA:53245"/>
    </physiologicalReaction>
</comment>
<comment type="catalytic activity">
    <reaction evidence="1">
        <text>7-dehydrocholesterol + reduced [NADPH--hemoprotein reductase] + O2 = cholesta-5,7-dien-3beta,25-diol + oxidized [NADPH--hemoprotein reductase] + H2O + H(+)</text>
        <dbReference type="Rhea" id="RHEA:53240"/>
        <dbReference type="Rhea" id="RHEA-COMP:11964"/>
        <dbReference type="Rhea" id="RHEA-COMP:11965"/>
        <dbReference type="ChEBI" id="CHEBI:15377"/>
        <dbReference type="ChEBI" id="CHEBI:15378"/>
        <dbReference type="ChEBI" id="CHEBI:15379"/>
        <dbReference type="ChEBI" id="CHEBI:17759"/>
        <dbReference type="ChEBI" id="CHEBI:57618"/>
        <dbReference type="ChEBI" id="CHEBI:58210"/>
        <dbReference type="ChEBI" id="CHEBI:137057"/>
    </reaction>
    <physiologicalReaction direction="left-to-right" evidence="9">
        <dbReference type="Rhea" id="RHEA:53241"/>
    </physiologicalReaction>
</comment>
<comment type="catalytic activity">
    <reaction evidence="1">
        <text>desmosterol + reduced [NADPH--hemoprotein reductase] + O2 = (24Z),26-hydroxydesmosterol + oxidized [NADPH--hemoprotein reductase] + H2O + H(+)</text>
        <dbReference type="Rhea" id="RHEA:53236"/>
        <dbReference type="Rhea" id="RHEA-COMP:11964"/>
        <dbReference type="Rhea" id="RHEA-COMP:11965"/>
        <dbReference type="ChEBI" id="CHEBI:15377"/>
        <dbReference type="ChEBI" id="CHEBI:15378"/>
        <dbReference type="ChEBI" id="CHEBI:15379"/>
        <dbReference type="ChEBI" id="CHEBI:17737"/>
        <dbReference type="ChEBI" id="CHEBI:57618"/>
        <dbReference type="ChEBI" id="CHEBI:58210"/>
        <dbReference type="ChEBI" id="CHEBI:137053"/>
    </reaction>
    <physiologicalReaction direction="left-to-right" evidence="9">
        <dbReference type="Rhea" id="RHEA:53237"/>
    </physiologicalReaction>
</comment>
<comment type="catalytic activity">
    <reaction evidence="1">
        <text>desmosterol + reduced [NADPH--hemoprotein reductase] + O2 = (24S)-25-epoxycholesterol + oxidized [NADPH--hemoprotein reductase] + H2O + H(+)</text>
        <dbReference type="Rhea" id="RHEA:53232"/>
        <dbReference type="Rhea" id="RHEA-COMP:11964"/>
        <dbReference type="Rhea" id="RHEA-COMP:11965"/>
        <dbReference type="ChEBI" id="CHEBI:15377"/>
        <dbReference type="ChEBI" id="CHEBI:15378"/>
        <dbReference type="ChEBI" id="CHEBI:15379"/>
        <dbReference type="ChEBI" id="CHEBI:17737"/>
        <dbReference type="ChEBI" id="CHEBI:41633"/>
        <dbReference type="ChEBI" id="CHEBI:57618"/>
        <dbReference type="ChEBI" id="CHEBI:58210"/>
    </reaction>
    <physiologicalReaction direction="left-to-right" evidence="9">
        <dbReference type="Rhea" id="RHEA:53233"/>
    </physiologicalReaction>
</comment>
<comment type="catalytic activity">
    <reaction evidence="1">
        <text>4beta-hydroxycholesterol + reduced [NADPH--hemoprotein reductase] + O2 = 4beta,24S-dihydroxycholesterol + oxidized [NADPH--hemoprotein reductase] + H2O + H(+)</text>
        <dbReference type="Rhea" id="RHEA:46392"/>
        <dbReference type="Rhea" id="RHEA-COMP:11964"/>
        <dbReference type="Rhea" id="RHEA-COMP:11965"/>
        <dbReference type="ChEBI" id="CHEBI:15377"/>
        <dbReference type="ChEBI" id="CHEBI:15378"/>
        <dbReference type="ChEBI" id="CHEBI:15379"/>
        <dbReference type="ChEBI" id="CHEBI:57618"/>
        <dbReference type="ChEBI" id="CHEBI:58210"/>
        <dbReference type="ChEBI" id="CHEBI:85778"/>
        <dbReference type="ChEBI" id="CHEBI:86087"/>
    </reaction>
    <physiologicalReaction direction="left-to-right" evidence="9">
        <dbReference type="Rhea" id="RHEA:46393"/>
    </physiologicalReaction>
</comment>
<comment type="catalytic activity">
    <reaction evidence="1">
        <text>(24S)-hydroxycholesterol + reduced [NADPH--hemoprotein reductase] + O2 = (24S,25R)-24,26-dihydroxycholesterol + oxidized [NADPH--hemoprotein reductase] + H2O + H(+)</text>
        <dbReference type="Rhea" id="RHEA:46388"/>
        <dbReference type="Rhea" id="RHEA-COMP:11964"/>
        <dbReference type="Rhea" id="RHEA-COMP:11965"/>
        <dbReference type="ChEBI" id="CHEBI:15377"/>
        <dbReference type="ChEBI" id="CHEBI:15378"/>
        <dbReference type="ChEBI" id="CHEBI:15379"/>
        <dbReference type="ChEBI" id="CHEBI:34310"/>
        <dbReference type="ChEBI" id="CHEBI:57618"/>
        <dbReference type="ChEBI" id="CHEBI:58210"/>
        <dbReference type="ChEBI" id="CHEBI:86165"/>
    </reaction>
    <physiologicalReaction direction="left-to-right" evidence="9">
        <dbReference type="Rhea" id="RHEA:46389"/>
    </physiologicalReaction>
</comment>
<comment type="catalytic activity">
    <reaction evidence="1">
        <text>(24S)-hydroxycholesterol + reduced [NADPH--hemoprotein reductase] + O2 = 24S,25-dihydroxycholesterol + oxidized [NADPH--hemoprotein reductase] + H2O + H(+)</text>
        <dbReference type="Rhea" id="RHEA:46384"/>
        <dbReference type="Rhea" id="RHEA-COMP:11964"/>
        <dbReference type="Rhea" id="RHEA-COMP:11965"/>
        <dbReference type="ChEBI" id="CHEBI:15377"/>
        <dbReference type="ChEBI" id="CHEBI:15378"/>
        <dbReference type="ChEBI" id="CHEBI:15379"/>
        <dbReference type="ChEBI" id="CHEBI:34310"/>
        <dbReference type="ChEBI" id="CHEBI:57618"/>
        <dbReference type="ChEBI" id="CHEBI:58210"/>
        <dbReference type="ChEBI" id="CHEBI:86074"/>
    </reaction>
    <physiologicalReaction direction="left-to-right" evidence="9">
        <dbReference type="Rhea" id="RHEA:46385"/>
    </physiologicalReaction>
</comment>
<comment type="catalytic activity">
    <reaction evidence="1">
        <text>7alpha-hydroxycholesterol + reduced [NADPH--hemoprotein reductase] + O2 = (24S)-7alpha-dihydroxycholesterol + oxidized [NADPH--hemoprotein reductase] + H2O + H(+)</text>
        <dbReference type="Rhea" id="RHEA:46380"/>
        <dbReference type="Rhea" id="RHEA-COMP:11964"/>
        <dbReference type="Rhea" id="RHEA-COMP:11965"/>
        <dbReference type="ChEBI" id="CHEBI:15377"/>
        <dbReference type="ChEBI" id="CHEBI:15378"/>
        <dbReference type="ChEBI" id="CHEBI:15379"/>
        <dbReference type="ChEBI" id="CHEBI:17500"/>
        <dbReference type="ChEBI" id="CHEBI:37640"/>
        <dbReference type="ChEBI" id="CHEBI:57618"/>
        <dbReference type="ChEBI" id="CHEBI:58210"/>
    </reaction>
    <physiologicalReaction direction="left-to-right" evidence="9">
        <dbReference type="Rhea" id="RHEA:46381"/>
    </physiologicalReaction>
</comment>
<comment type="catalytic activity">
    <reaction evidence="1">
        <text>progesterone + reduced [NADPH--hemoprotein reductase] + O2 = 17alpha-hydroxyprogesterone + oxidized [NADPH--hemoprotein reductase] + H2O + H(+)</text>
        <dbReference type="Rhea" id="RHEA:46308"/>
        <dbReference type="Rhea" id="RHEA-COMP:11964"/>
        <dbReference type="Rhea" id="RHEA-COMP:11965"/>
        <dbReference type="ChEBI" id="CHEBI:15377"/>
        <dbReference type="ChEBI" id="CHEBI:15378"/>
        <dbReference type="ChEBI" id="CHEBI:15379"/>
        <dbReference type="ChEBI" id="CHEBI:17026"/>
        <dbReference type="ChEBI" id="CHEBI:17252"/>
        <dbReference type="ChEBI" id="CHEBI:57618"/>
        <dbReference type="ChEBI" id="CHEBI:58210"/>
    </reaction>
    <physiologicalReaction direction="left-to-right" evidence="9">
        <dbReference type="Rhea" id="RHEA:46309"/>
    </physiologicalReaction>
</comment>
<comment type="catalytic activity">
    <reaction evidence="1">
        <text>testosterone + reduced [NADPH--hemoprotein reductase] + O2 = 16beta,17beta-dihydroxyandrost-4-en-3-one + oxidized [NADPH--hemoprotein reductase] + H2O + H(+)</text>
        <dbReference type="Rhea" id="RHEA:46304"/>
        <dbReference type="Rhea" id="RHEA-COMP:11964"/>
        <dbReference type="Rhea" id="RHEA-COMP:11965"/>
        <dbReference type="ChEBI" id="CHEBI:15377"/>
        <dbReference type="ChEBI" id="CHEBI:15378"/>
        <dbReference type="ChEBI" id="CHEBI:15379"/>
        <dbReference type="ChEBI" id="CHEBI:17347"/>
        <dbReference type="ChEBI" id="CHEBI:57618"/>
        <dbReference type="ChEBI" id="CHEBI:58210"/>
        <dbReference type="ChEBI" id="CHEBI:83027"/>
    </reaction>
    <physiologicalReaction direction="left-to-right" evidence="9">
        <dbReference type="Rhea" id="RHEA:46305"/>
    </physiologicalReaction>
</comment>
<comment type="catalytic activity">
    <reaction evidence="1">
        <text>testosterone + reduced [NADPH--hemoprotein reductase] + O2 = 2-hydroxytestosterone + oxidized [NADPH--hemoprotein reductase] + H2O + H(+)</text>
        <dbReference type="Rhea" id="RHEA:46300"/>
        <dbReference type="Rhea" id="RHEA-COMP:11964"/>
        <dbReference type="Rhea" id="RHEA-COMP:11965"/>
        <dbReference type="ChEBI" id="CHEBI:15377"/>
        <dbReference type="ChEBI" id="CHEBI:15378"/>
        <dbReference type="ChEBI" id="CHEBI:15379"/>
        <dbReference type="ChEBI" id="CHEBI:17347"/>
        <dbReference type="ChEBI" id="CHEBI:57618"/>
        <dbReference type="ChEBI" id="CHEBI:58210"/>
        <dbReference type="ChEBI" id="CHEBI:86013"/>
    </reaction>
    <physiologicalReaction direction="left-to-right" evidence="9">
        <dbReference type="Rhea" id="RHEA:46301"/>
    </physiologicalReaction>
</comment>
<comment type="catalytic activity">
    <reaction evidence="1">
        <text>testosterone + reduced [NADPH--hemoprotein reductase] + O2 = 6beta,17beta-dihydroxyandrost-4-en-3-one + oxidized [NADPH--hemoprotein reductase] + H2O + H(+)</text>
        <dbReference type="Rhea" id="RHEA:46296"/>
        <dbReference type="Rhea" id="RHEA-COMP:11964"/>
        <dbReference type="Rhea" id="RHEA-COMP:11965"/>
        <dbReference type="ChEBI" id="CHEBI:15377"/>
        <dbReference type="ChEBI" id="CHEBI:15378"/>
        <dbReference type="ChEBI" id="CHEBI:15379"/>
        <dbReference type="ChEBI" id="CHEBI:17347"/>
        <dbReference type="ChEBI" id="CHEBI:34477"/>
        <dbReference type="ChEBI" id="CHEBI:57618"/>
        <dbReference type="ChEBI" id="CHEBI:58210"/>
    </reaction>
    <physiologicalReaction direction="left-to-right" evidence="9">
        <dbReference type="Rhea" id="RHEA:46297"/>
    </physiologicalReaction>
</comment>
<comment type="cofactor">
    <cofactor evidence="1">
        <name>heme</name>
        <dbReference type="ChEBI" id="CHEBI:30413"/>
    </cofactor>
</comment>
<comment type="pathway">
    <text evidence="11">Steroid metabolism; cholesterol degradation.</text>
</comment>
<comment type="pathway">
    <text evidence="1">Lipid metabolism; C21-steroid hormone metabolism.</text>
</comment>
<comment type="subcellular location">
    <subcellularLocation>
        <location evidence="5">Endoplasmic reticulum membrane</location>
        <topology>Single-pass membrane protein</topology>
    </subcellularLocation>
    <subcellularLocation>
        <location>Microsome membrane</location>
        <topology>Single-pass membrane protein</topology>
    </subcellularLocation>
    <subcellularLocation>
        <location evidence="4">Postsynapse</location>
    </subcellularLocation>
    <subcellularLocation>
        <location evidence="4">Presynapse</location>
    </subcellularLocation>
    <subcellularLocation>
        <location evidence="5">Cell projection</location>
        <location evidence="5">Dendrite</location>
    </subcellularLocation>
</comment>
<comment type="tissue specificity">
    <text evidence="3 5">Expressed in high level in the pyramidal cells of the hippocampus, Purkinje cells of the cerebellum, and neuronal cell bodies in layers II/III, V, and VI of the cortex. Expressed in hippocampal and cerebellar interneurons, in retinal ganglion cells, and in a subset of retinal cells localized to the inner nuclear layer (at protein level).</text>
</comment>
<comment type="disruption phenotype">
    <text evidence="4">Mutant mice are deficient in spatial, associative and motor learning.</text>
</comment>
<comment type="similarity">
    <text evidence="9">Belongs to the cytochrome P450 family.</text>
</comment>
<reference key="1">
    <citation type="journal article" date="1999" name="Proc. Natl. Acad. Sci. U.S.A.">
        <title>cDNA cloning of cholesterol 24-hydroxylase, a mediator of cholesterol homeostasis in the brain.</title>
        <authorList>
            <person name="Lund E.G."/>
            <person name="Guileyardo J.M."/>
            <person name="Russell D.W."/>
        </authorList>
    </citation>
    <scope>NUCLEOTIDE SEQUENCE [MRNA]</scope>
    <scope>TISSUE SPECIFICITY</scope>
    <scope>FUNCTION</scope>
    <scope>CATALYTIC ACTIVITY</scope>
    <source>
        <tissue>Liver</tissue>
    </source>
</reference>
<reference key="2">
    <citation type="journal article" date="2004" name="Genome Res.">
        <title>The status, quality, and expansion of the NIH full-length cDNA project: the Mammalian Gene Collection (MGC).</title>
        <authorList>
            <consortium name="The MGC Project Team"/>
        </authorList>
    </citation>
    <scope>NUCLEOTIDE SEQUENCE [LARGE SCALE MRNA]</scope>
    <source>
        <tissue>Liver</tissue>
    </source>
</reference>
<reference key="3">
    <citation type="journal article" date="2006" name="Proc. Natl. Acad. Sci. U.S.A.">
        <title>Brain cholesterol turnover required for geranylgeraniol production and learning in mice.</title>
        <authorList>
            <person name="Kotti T.J."/>
            <person name="Ramirez D.M."/>
            <person name="Pfeiffer B.E."/>
            <person name="Huber K.M."/>
            <person name="Russell D.W."/>
        </authorList>
    </citation>
    <scope>FUNCTION</scope>
    <scope>DISRUPTION PHENOTYPE</scope>
    <scope>SUBCELLULAR LOCATION</scope>
</reference>
<reference key="4">
    <citation type="journal article" date="2008" name="J. Comp. Neurol.">
        <title>Neuronal expression and subcellular localization of cholesterol 24-hydroxylase in the mouse brain.</title>
        <authorList>
            <person name="Ramirez D.M."/>
            <person name="Andersson S."/>
            <person name="Russell D.W."/>
        </authorList>
    </citation>
    <scope>SUBCELLULAR LOCATION</scope>
    <scope>TISSUE SPECIFICITY</scope>
</reference>
<reference key="5">
    <citation type="journal article" date="2010" name="Cell">
        <title>A tissue-specific atlas of mouse protein phosphorylation and expression.</title>
        <authorList>
            <person name="Huttlin E.L."/>
            <person name="Jedrychowski M.P."/>
            <person name="Elias J.E."/>
            <person name="Goswami T."/>
            <person name="Rad R."/>
            <person name="Beausoleil S.A."/>
            <person name="Villen J."/>
            <person name="Haas W."/>
            <person name="Sowa M.E."/>
            <person name="Gygi S.P."/>
        </authorList>
    </citation>
    <scope>IDENTIFICATION BY MASS SPECTROMETRY [LARGE SCALE ANALYSIS]</scope>
    <source>
        <tissue>Brain</tissue>
    </source>
</reference>
<reference key="6">
    <citation type="journal article" date="2017" name="J. Biol. Chem.">
        <title>Cytochrome P450 27A1 Deficiency and Regional Differences in Brain Sterol Metabolism Cause Preferential Cholestanol Accumulation in the Cerebellum.</title>
        <authorList>
            <person name="Mast N."/>
            <person name="Anderson K.W."/>
            <person name="Lin J.B."/>
            <person name="Li Y."/>
            <person name="Turko I.V."/>
            <person name="Tatsuoka C."/>
            <person name="Bjorkhem I."/>
            <person name="Pikuleva I.A."/>
        </authorList>
    </citation>
    <scope>CATALYTIC ACTIVITY</scope>
    <scope>FUNCTION</scope>
    <scope>PATHWAY</scope>
</reference>